<sequence length="568" mass="62663">MPHAPARSGDAMSAAAPPCCTSLLGLSLSMFVAPCALAATPLEGAVVSAPAPTPPTPDLAYPELFQAVQRGELFDDQKHFVDFLPLRDPALINADYLAQHEHAGFDLRKFVDANFEESPPVQTDAIRQDTALREHIDALWPKLVRSQTNVPAHSSLLALPHPYVVPGGRFREVYYWDSYFTMLGLVKSGETTLSRQMLDNFAYLIDTYGHIPNGNRTYYLSRSQPPFFSYMVELQAGVEGEAVYQRYLPQLQKEYAYWMQGGDDLQPGQAARHVVRLADGSVLNRYWDERDTPRPEAWLHDTRTAAEAHDRPAADVYRDLRAGAESGWDYTSRWLADGKTLSTIRTTAIVPIDLNSLLYHLERTLAQACAHTGTACSQDYAALAQQRKQAIDAHLWNAAGYYADYDWQTRTLSNQVTAAALYPLFAGLASADHAKRTATSVRARLLRPGGLATTALKTGQQWDEPNGWAPLQWVAVDGLRRYGEDGLARTIGERFLTQVQALFAREHKLVEKYGLDADAAGGGGGEYALQDGFGWTNGVTLMLLNLYPSPGAIQAPAKTKRKPEPAAP</sequence>
<accession>B0RNH1</accession>
<gene>
    <name evidence="1" type="primary">treA</name>
    <name type="ordered locus">xcc-b100_0667</name>
</gene>
<name>TREA_XANCB</name>
<organism>
    <name type="scientific">Xanthomonas campestris pv. campestris (strain B100)</name>
    <dbReference type="NCBI Taxonomy" id="509169"/>
    <lineage>
        <taxon>Bacteria</taxon>
        <taxon>Pseudomonadati</taxon>
        <taxon>Pseudomonadota</taxon>
        <taxon>Gammaproteobacteria</taxon>
        <taxon>Lysobacterales</taxon>
        <taxon>Lysobacteraceae</taxon>
        <taxon>Xanthomonas</taxon>
    </lineage>
</organism>
<keyword id="KW-0326">Glycosidase</keyword>
<keyword id="KW-0378">Hydrolase</keyword>
<keyword id="KW-0574">Periplasm</keyword>
<keyword id="KW-0732">Signal</keyword>
<reference key="1">
    <citation type="journal article" date="2008" name="J. Biotechnol.">
        <title>The genome of Xanthomonas campestris pv. campestris B100 and its use for the reconstruction of metabolic pathways involved in xanthan biosynthesis.</title>
        <authorList>
            <person name="Vorhoelter F.-J."/>
            <person name="Schneiker S."/>
            <person name="Goesmann A."/>
            <person name="Krause L."/>
            <person name="Bekel T."/>
            <person name="Kaiser O."/>
            <person name="Linke B."/>
            <person name="Patschkowski T."/>
            <person name="Rueckert C."/>
            <person name="Schmid J."/>
            <person name="Sidhu V.K."/>
            <person name="Sieber V."/>
            <person name="Tauch A."/>
            <person name="Watt S.A."/>
            <person name="Weisshaar B."/>
            <person name="Becker A."/>
            <person name="Niehaus K."/>
            <person name="Puehler A."/>
        </authorList>
    </citation>
    <scope>NUCLEOTIDE SEQUENCE [LARGE SCALE GENOMIC DNA]</scope>
    <source>
        <strain>B100</strain>
    </source>
</reference>
<proteinExistence type="inferred from homology"/>
<evidence type="ECO:0000255" key="1">
    <source>
        <dbReference type="HAMAP-Rule" id="MF_01060"/>
    </source>
</evidence>
<comment type="function">
    <text evidence="1">Provides the cells with the ability to utilize trehalose at high osmolarity by splitting it into glucose molecules that can subsequently be taken up by the phosphotransferase-mediated uptake system.</text>
</comment>
<comment type="catalytic activity">
    <reaction evidence="1">
        <text>alpha,alpha-trehalose + H2O = alpha-D-glucose + beta-D-glucose</text>
        <dbReference type="Rhea" id="RHEA:32675"/>
        <dbReference type="ChEBI" id="CHEBI:15377"/>
        <dbReference type="ChEBI" id="CHEBI:15903"/>
        <dbReference type="ChEBI" id="CHEBI:16551"/>
        <dbReference type="ChEBI" id="CHEBI:17925"/>
        <dbReference type="EC" id="3.2.1.28"/>
    </reaction>
</comment>
<comment type="subcellular location">
    <subcellularLocation>
        <location evidence="1">Periplasm</location>
    </subcellularLocation>
</comment>
<comment type="similarity">
    <text evidence="1">Belongs to the glycosyl hydrolase 37 family.</text>
</comment>
<feature type="signal peptide" evidence="1">
    <location>
        <begin position="1"/>
        <end position="38"/>
    </location>
</feature>
<feature type="chain" id="PRO_1000136428" description="Periplasmic trehalase">
    <location>
        <begin position="39"/>
        <end position="568"/>
    </location>
</feature>
<feature type="active site" description="Proton donor/acceptor" evidence="1">
    <location>
        <position position="329"/>
    </location>
</feature>
<feature type="active site" description="Proton donor/acceptor" evidence="1">
    <location>
        <position position="511"/>
    </location>
</feature>
<feature type="binding site" evidence="1">
    <location>
        <position position="169"/>
    </location>
    <ligand>
        <name>substrate</name>
    </ligand>
</feature>
<feature type="binding site" evidence="1">
    <location>
        <begin position="176"/>
        <end position="177"/>
    </location>
    <ligand>
        <name>substrate</name>
    </ligand>
</feature>
<feature type="binding site" evidence="1">
    <location>
        <position position="213"/>
    </location>
    <ligand>
        <name>substrate</name>
    </ligand>
</feature>
<feature type="binding site" evidence="1">
    <location>
        <begin position="222"/>
        <end position="224"/>
    </location>
    <ligand>
        <name>substrate</name>
    </ligand>
</feature>
<feature type="binding site" evidence="1">
    <location>
        <begin position="294"/>
        <end position="296"/>
    </location>
    <ligand>
        <name>substrate</name>
    </ligand>
</feature>
<feature type="binding site" evidence="1">
    <location>
        <position position="327"/>
    </location>
    <ligand>
        <name>substrate</name>
    </ligand>
</feature>
<feature type="binding site" evidence="1">
    <location>
        <position position="526"/>
    </location>
    <ligand>
        <name>substrate</name>
    </ligand>
</feature>
<dbReference type="EC" id="3.2.1.28" evidence="1"/>
<dbReference type="EMBL" id="AM920689">
    <property type="protein sequence ID" value="CAP50006.1"/>
    <property type="molecule type" value="Genomic_DNA"/>
</dbReference>
<dbReference type="SMR" id="B0RNH1"/>
<dbReference type="KEGG" id="xca:xcc-b100_0667"/>
<dbReference type="HOGENOM" id="CLU_006451_3_1_6"/>
<dbReference type="Proteomes" id="UP000001188">
    <property type="component" value="Chromosome"/>
</dbReference>
<dbReference type="GO" id="GO:0042597">
    <property type="term" value="C:periplasmic space"/>
    <property type="evidence" value="ECO:0007669"/>
    <property type="project" value="UniProtKB-SubCell"/>
</dbReference>
<dbReference type="GO" id="GO:0004555">
    <property type="term" value="F:alpha,alpha-trehalase activity"/>
    <property type="evidence" value="ECO:0007669"/>
    <property type="project" value="UniProtKB-UniRule"/>
</dbReference>
<dbReference type="GO" id="GO:0071474">
    <property type="term" value="P:cellular hyperosmotic response"/>
    <property type="evidence" value="ECO:0007669"/>
    <property type="project" value="InterPro"/>
</dbReference>
<dbReference type="GO" id="GO:0005993">
    <property type="term" value="P:trehalose catabolic process"/>
    <property type="evidence" value="ECO:0007669"/>
    <property type="project" value="InterPro"/>
</dbReference>
<dbReference type="FunFam" id="1.50.10.10:FF:000003">
    <property type="entry name" value="Cytoplasmic trehalase"/>
    <property type="match status" value="1"/>
</dbReference>
<dbReference type="Gene3D" id="1.50.10.10">
    <property type="match status" value="1"/>
</dbReference>
<dbReference type="HAMAP" id="MF_01060">
    <property type="entry name" value="Peripl_trehalase"/>
    <property type="match status" value="1"/>
</dbReference>
<dbReference type="InterPro" id="IPR008928">
    <property type="entry name" value="6-hairpin_glycosidase_sf"/>
</dbReference>
<dbReference type="InterPro" id="IPR012341">
    <property type="entry name" value="6hp_glycosidase-like_sf"/>
</dbReference>
<dbReference type="InterPro" id="IPR001661">
    <property type="entry name" value="Glyco_hydro_37"/>
</dbReference>
<dbReference type="InterPro" id="IPR018232">
    <property type="entry name" value="Glyco_hydro_37_CS"/>
</dbReference>
<dbReference type="InterPro" id="IPR023720">
    <property type="entry name" value="Trehalase_periplasmic"/>
</dbReference>
<dbReference type="NCBIfam" id="NF009773">
    <property type="entry name" value="PRK13270.1"/>
    <property type="match status" value="1"/>
</dbReference>
<dbReference type="NCBIfam" id="NF009774">
    <property type="entry name" value="PRK13271.1"/>
    <property type="match status" value="1"/>
</dbReference>
<dbReference type="NCBIfam" id="NF009775">
    <property type="entry name" value="PRK13272.1"/>
    <property type="match status" value="1"/>
</dbReference>
<dbReference type="PANTHER" id="PTHR23403">
    <property type="entry name" value="TREHALASE"/>
    <property type="match status" value="1"/>
</dbReference>
<dbReference type="PANTHER" id="PTHR23403:SF1">
    <property type="entry name" value="TREHALASE"/>
    <property type="match status" value="1"/>
</dbReference>
<dbReference type="Pfam" id="PF01204">
    <property type="entry name" value="Trehalase"/>
    <property type="match status" value="1"/>
</dbReference>
<dbReference type="PRINTS" id="PR00744">
    <property type="entry name" value="GLHYDRLASE37"/>
</dbReference>
<dbReference type="SUPFAM" id="SSF48208">
    <property type="entry name" value="Six-hairpin glycosidases"/>
    <property type="match status" value="1"/>
</dbReference>
<dbReference type="PROSITE" id="PS00927">
    <property type="entry name" value="TREHALASE_1"/>
    <property type="match status" value="1"/>
</dbReference>
<dbReference type="PROSITE" id="PS00928">
    <property type="entry name" value="TREHALASE_2"/>
    <property type="match status" value="1"/>
</dbReference>
<protein>
    <recommendedName>
        <fullName evidence="1">Periplasmic trehalase</fullName>
        <ecNumber evidence="1">3.2.1.28</ecNumber>
    </recommendedName>
    <alternativeName>
        <fullName evidence="1">Alpha,alpha-trehalase</fullName>
    </alternativeName>
    <alternativeName>
        <fullName evidence="1">Alpha,alpha-trehalose glucohydrolase</fullName>
    </alternativeName>
</protein>